<sequence>MVQLTIDNARGVTLCRVSLPANATVQQLLLQLTVAKPELRQAQAIRNDVRHVTHRLTPASTTTTTTTSVVSSNAQTLLQAGLVGQGATAETLVVLMAADAPAAASSAAAAAPSPTKAVAAQILDLFGCASASPSAGVRSQASVVPSTMDERQLELQRRIYAQIQQQQIDENLANALEYTPEAFAKVTMLYVPCTINQVLVKAFVDSGAQNSIMNKRTAERCGLMRLVDVRMRDVAVGVGRQEICGRIHMTPVNLAGMYIPFAFYVIEDQAMDLIIGLDQLKRHQMMIDLKHNCLTIDNINVPFLPENDLPALAALGDDENAMHAPRHQDPATTATTASNPAAPVLSEGERQARIEGFMTVSGITDPTQAAELLEAADWNPNVAAALLFDT</sequence>
<evidence type="ECO:0000250" key="1">
    <source>
        <dbReference type="UniProtKB" id="P40087"/>
    </source>
</evidence>
<evidence type="ECO:0000250" key="2">
    <source>
        <dbReference type="UniProtKB" id="Q8WTU0"/>
    </source>
</evidence>
<evidence type="ECO:0000256" key="3">
    <source>
        <dbReference type="SAM" id="MobiDB-lite"/>
    </source>
</evidence>
<evidence type="ECO:0000269" key="4">
    <source>
    </source>
</evidence>
<evidence type="ECO:0000269" key="5">
    <source>
    </source>
</evidence>
<evidence type="ECO:0000303" key="6">
    <source>
    </source>
</evidence>
<evidence type="ECO:0000305" key="7"/>
<evidence type="ECO:0000305" key="8">
    <source>
    </source>
</evidence>
<evidence type="ECO:0000312" key="9">
    <source>
        <dbReference type="EMBL" id="CCB84598.1"/>
    </source>
</evidence>
<evidence type="ECO:0007829" key="10">
    <source>
        <dbReference type="PDB" id="5YQ8"/>
    </source>
</evidence>
<comment type="function">
    <text evidence="5 8">Aspartic protease (PubMed:21266539, PubMed:22933181).</text>
</comment>
<comment type="activity regulation">
    <text evidence="4 5">Inhibited by pepstatin, diazoacetyl-DL-norleucine methyl ester (DAN) and nelfinavir (PubMed:22933181). Inhibited by the proteinase inhibitors lopinavir and ritonavir (PubMed:21266539).</text>
</comment>
<comment type="biophysicochemical properties">
    <kinetics>
        <KM evidence="5">0.57 uM for RE-(EDANS)-SQNYPIVQK-(DABCYL)-R (at 37 degrees Celsius and pH 4-6.5)</KM>
        <KM evidence="5">7.6 uM for Bz-RGFFL-4MbetaNA (at 37 degrees Celsius and pH 4)</KM>
        <KM evidence="5">1.18 uM for Bz-RGFFP-4MbetaNA (at 37 degrees Celsius and pH 8)</KM>
    </kinetics>
    <phDependence>
        <text evidence="5">Optimum pH is 5 with RE-(EDANS)-SQNYPIVQK-(DABCYL)-R as substrate.</text>
    </phDependence>
</comment>
<comment type="subcellular location">
    <subcellularLocation>
        <location evidence="1">Cytoplasm</location>
    </subcellularLocation>
</comment>
<comment type="similarity">
    <text evidence="7">Belongs to the DDI1 family.</text>
</comment>
<reference evidence="9" key="1">
    <citation type="journal article" date="2013" name="Cell Stress Chaperones">
        <title>Ddi1-like protein from Leishmania major is an active aspartyl proteinase.</title>
        <authorList>
            <person name="Perteguer M.J."/>
            <person name="Gomez-Puertas P."/>
            <person name="Canavate C."/>
            <person name="Dagger F."/>
            <person name="Garate T."/>
            <person name="Valdivieso E."/>
        </authorList>
    </citation>
    <scope>NUCLEOTIDE SEQUENCE [MRNA]</scope>
    <scope>FUNCTION</scope>
    <scope>CATALYTIC ACTIVITY</scope>
    <scope>ACTIVITY REGULATION</scope>
    <scope>BIOPHYSICOCHEMICAL PROPERTIES</scope>
</reference>
<reference evidence="7" key="2">
    <citation type="journal article" date="2011" name="FASEB J.">
        <title>HIV proteinase inhibitors target the Ddi1-like protein of Leishmania parasites.</title>
        <authorList>
            <person name="White R.E."/>
            <person name="Powell D.J."/>
            <person name="Berry C."/>
        </authorList>
    </citation>
    <scope>FUNCTION</scope>
    <scope>CATALYTIC ACTIVITY</scope>
    <scope>ACTIVITY REGULATION</scope>
    <scope>MUTAGENESIS OF ASP-205</scope>
</reference>
<accession>I7HUG0</accession>
<proteinExistence type="evidence at protein level"/>
<protein>
    <recommendedName>
        <fullName evidence="2">Protein DDI1 homolog</fullName>
        <ecNumber evidence="5 8">3.4.23.-</ecNumber>
    </recommendedName>
    <alternativeName>
        <fullName evidence="6">DDI1-like protein</fullName>
    </alternativeName>
</protein>
<gene>
    <name evidence="6" type="primary">DDI1</name>
</gene>
<keyword id="KW-0002">3D-structure</keyword>
<keyword id="KW-0064">Aspartyl protease</keyword>
<keyword id="KW-0963">Cytoplasm</keyword>
<keyword id="KW-0378">Hydrolase</keyword>
<keyword id="KW-0645">Protease</keyword>
<dbReference type="EC" id="3.4.23.-" evidence="5 8"/>
<dbReference type="EMBL" id="FR872380">
    <property type="protein sequence ID" value="CCB84598.1"/>
    <property type="molecule type" value="mRNA"/>
</dbReference>
<dbReference type="PDB" id="5YQ8">
    <property type="method" value="X-ray"/>
    <property type="resolution" value="2.25 A"/>
    <property type="chains" value="A/B/C/D=184-313"/>
</dbReference>
<dbReference type="PDB" id="5YS4">
    <property type="method" value="X-ray"/>
    <property type="resolution" value="2.30 A"/>
    <property type="chains" value="A/B/C/D/E/F=182-311"/>
</dbReference>
<dbReference type="PDBsum" id="5YQ8"/>
<dbReference type="PDBsum" id="5YS4"/>
<dbReference type="SMR" id="I7HUG0"/>
<dbReference type="VEuPathDB" id="TriTrypDB:LmjF.01.0610"/>
<dbReference type="VEuPathDB" id="TriTrypDB:LMJFC_010011500"/>
<dbReference type="VEuPathDB" id="TriTrypDB:LMJLV39_010011400"/>
<dbReference type="VEuPathDB" id="TriTrypDB:LMJSD75_010011400"/>
<dbReference type="GO" id="GO:0005737">
    <property type="term" value="C:cytoplasm"/>
    <property type="evidence" value="ECO:0007669"/>
    <property type="project" value="UniProtKB-SubCell"/>
</dbReference>
<dbReference type="GO" id="GO:0004190">
    <property type="term" value="F:aspartic-type endopeptidase activity"/>
    <property type="evidence" value="ECO:0007669"/>
    <property type="project" value="UniProtKB-KW"/>
</dbReference>
<dbReference type="GO" id="GO:0006508">
    <property type="term" value="P:proteolysis"/>
    <property type="evidence" value="ECO:0007669"/>
    <property type="project" value="UniProtKB-KW"/>
</dbReference>
<dbReference type="CDD" id="cd05479">
    <property type="entry name" value="RP_DDI"/>
    <property type="match status" value="1"/>
</dbReference>
<dbReference type="CDD" id="cd14273">
    <property type="entry name" value="UBA_TAP-C_like"/>
    <property type="match status" value="1"/>
</dbReference>
<dbReference type="Gene3D" id="2.40.70.10">
    <property type="entry name" value="Acid Proteases"/>
    <property type="match status" value="1"/>
</dbReference>
<dbReference type="InterPro" id="IPR019103">
    <property type="entry name" value="Peptidase_aspartic_DDI1-type"/>
</dbReference>
<dbReference type="InterPro" id="IPR021109">
    <property type="entry name" value="Peptidase_aspartic_dom_sf"/>
</dbReference>
<dbReference type="PANTHER" id="PTHR12917">
    <property type="entry name" value="ASPARTYL PROTEASE DDI-RELATED"/>
    <property type="match status" value="1"/>
</dbReference>
<dbReference type="PANTHER" id="PTHR12917:SF1">
    <property type="entry name" value="AT13091P"/>
    <property type="match status" value="1"/>
</dbReference>
<dbReference type="Pfam" id="PF09668">
    <property type="entry name" value="Asp_protease"/>
    <property type="match status" value="1"/>
</dbReference>
<dbReference type="Pfam" id="PF14555">
    <property type="entry name" value="UBA_4"/>
    <property type="match status" value="1"/>
</dbReference>
<dbReference type="SUPFAM" id="SSF50630">
    <property type="entry name" value="Acid proteases"/>
    <property type="match status" value="1"/>
</dbReference>
<organism evidence="9">
    <name type="scientific">Leishmania major</name>
    <dbReference type="NCBI Taxonomy" id="5664"/>
    <lineage>
        <taxon>Eukaryota</taxon>
        <taxon>Discoba</taxon>
        <taxon>Euglenozoa</taxon>
        <taxon>Kinetoplastea</taxon>
        <taxon>Metakinetoplastina</taxon>
        <taxon>Trypanosomatida</taxon>
        <taxon>Trypanosomatidae</taxon>
        <taxon>Leishmaniinae</taxon>
        <taxon>Leishmania</taxon>
    </lineage>
</organism>
<name>DDI1_LEIMA</name>
<feature type="chain" id="PRO_0000443528" description="Protein DDI1 homolog" evidence="7">
    <location>
        <begin position="1"/>
        <end position="390"/>
    </location>
</feature>
<feature type="region of interest" description="Disordered" evidence="3">
    <location>
        <begin position="322"/>
        <end position="344"/>
    </location>
</feature>
<feature type="compositionally biased region" description="Low complexity" evidence="3">
    <location>
        <begin position="330"/>
        <end position="343"/>
    </location>
</feature>
<feature type="active site" evidence="7">
    <location>
        <position position="205"/>
    </location>
</feature>
<feature type="mutagenesis site" description="When expressed in a DDI1-deficient yeast mutant with high levels of protein secretion, fails to restore normal low protein secretion levels probably due to loss of catalytic activity." evidence="4">
    <original>D</original>
    <variation>A</variation>
    <location>
        <position position="205"/>
    </location>
</feature>
<feature type="strand" evidence="10">
    <location>
        <begin position="190"/>
        <end position="195"/>
    </location>
</feature>
<feature type="strand" evidence="10">
    <location>
        <begin position="198"/>
        <end position="204"/>
    </location>
</feature>
<feature type="strand" evidence="10">
    <location>
        <begin position="212"/>
        <end position="214"/>
    </location>
</feature>
<feature type="helix" evidence="10">
    <location>
        <begin position="215"/>
        <end position="220"/>
    </location>
</feature>
<feature type="helix" evidence="10">
    <location>
        <begin position="224"/>
        <end position="226"/>
    </location>
</feature>
<feature type="turn" evidence="10">
    <location>
        <begin position="230"/>
        <end position="233"/>
    </location>
</feature>
<feature type="strand" evidence="10">
    <location>
        <begin position="237"/>
        <end position="239"/>
    </location>
</feature>
<feature type="strand" evidence="10">
    <location>
        <begin position="244"/>
        <end position="254"/>
    </location>
</feature>
<feature type="strand" evidence="10">
    <location>
        <begin position="257"/>
        <end position="268"/>
    </location>
</feature>
<feature type="strand" evidence="10">
    <location>
        <begin position="270"/>
        <end position="275"/>
    </location>
</feature>
<feature type="helix" evidence="10">
    <location>
        <begin position="277"/>
        <end position="282"/>
    </location>
</feature>
<feature type="strand" evidence="10">
    <location>
        <begin position="286"/>
        <end position="288"/>
    </location>
</feature>
<feature type="turn" evidence="10">
    <location>
        <begin position="289"/>
        <end position="292"/>
    </location>
</feature>
<feature type="strand" evidence="10">
    <location>
        <begin position="293"/>
        <end position="296"/>
    </location>
</feature>
<feature type="strand" evidence="10">
    <location>
        <begin position="299"/>
        <end position="302"/>
    </location>
</feature>
<feature type="helix" evidence="10">
    <location>
        <begin position="306"/>
        <end position="308"/>
    </location>
</feature>
<feature type="turn" evidence="10">
    <location>
        <begin position="309"/>
        <end position="311"/>
    </location>
</feature>